<reference key="1">
    <citation type="journal article" date="2000" name="Nature">
        <title>Sequence and analysis of chromosome 1 of the plant Arabidopsis thaliana.</title>
        <authorList>
            <person name="Theologis A."/>
            <person name="Ecker J.R."/>
            <person name="Palm C.J."/>
            <person name="Federspiel N.A."/>
            <person name="Kaul S."/>
            <person name="White O."/>
            <person name="Alonso J."/>
            <person name="Altafi H."/>
            <person name="Araujo R."/>
            <person name="Bowman C.L."/>
            <person name="Brooks S.Y."/>
            <person name="Buehler E."/>
            <person name="Chan A."/>
            <person name="Chao Q."/>
            <person name="Chen H."/>
            <person name="Cheuk R.F."/>
            <person name="Chin C.W."/>
            <person name="Chung M.K."/>
            <person name="Conn L."/>
            <person name="Conway A.B."/>
            <person name="Conway A.R."/>
            <person name="Creasy T.H."/>
            <person name="Dewar K."/>
            <person name="Dunn P."/>
            <person name="Etgu P."/>
            <person name="Feldblyum T.V."/>
            <person name="Feng J.-D."/>
            <person name="Fong B."/>
            <person name="Fujii C.Y."/>
            <person name="Gill J.E."/>
            <person name="Goldsmith A.D."/>
            <person name="Haas B."/>
            <person name="Hansen N.F."/>
            <person name="Hughes B."/>
            <person name="Huizar L."/>
            <person name="Hunter J.L."/>
            <person name="Jenkins J."/>
            <person name="Johnson-Hopson C."/>
            <person name="Khan S."/>
            <person name="Khaykin E."/>
            <person name="Kim C.J."/>
            <person name="Koo H.L."/>
            <person name="Kremenetskaia I."/>
            <person name="Kurtz D.B."/>
            <person name="Kwan A."/>
            <person name="Lam B."/>
            <person name="Langin-Hooper S."/>
            <person name="Lee A."/>
            <person name="Lee J.M."/>
            <person name="Lenz C.A."/>
            <person name="Li J.H."/>
            <person name="Li Y.-P."/>
            <person name="Lin X."/>
            <person name="Liu S.X."/>
            <person name="Liu Z.A."/>
            <person name="Luros J.S."/>
            <person name="Maiti R."/>
            <person name="Marziali A."/>
            <person name="Militscher J."/>
            <person name="Miranda M."/>
            <person name="Nguyen M."/>
            <person name="Nierman W.C."/>
            <person name="Osborne B.I."/>
            <person name="Pai G."/>
            <person name="Peterson J."/>
            <person name="Pham P.K."/>
            <person name="Rizzo M."/>
            <person name="Rooney T."/>
            <person name="Rowley D."/>
            <person name="Sakano H."/>
            <person name="Salzberg S.L."/>
            <person name="Schwartz J.R."/>
            <person name="Shinn P."/>
            <person name="Southwick A.M."/>
            <person name="Sun H."/>
            <person name="Tallon L.J."/>
            <person name="Tambunga G."/>
            <person name="Toriumi M.J."/>
            <person name="Town C.D."/>
            <person name="Utterback T."/>
            <person name="Van Aken S."/>
            <person name="Vaysberg M."/>
            <person name="Vysotskaia V.S."/>
            <person name="Walker M."/>
            <person name="Wu D."/>
            <person name="Yu G."/>
            <person name="Fraser C.M."/>
            <person name="Venter J.C."/>
            <person name="Davis R.W."/>
        </authorList>
    </citation>
    <scope>NUCLEOTIDE SEQUENCE [LARGE SCALE GENOMIC DNA]</scope>
    <source>
        <strain>cv. Columbia</strain>
    </source>
</reference>
<reference key="2">
    <citation type="journal article" date="2017" name="Plant J.">
        <title>Araport11: a complete reannotation of the Arabidopsis thaliana reference genome.</title>
        <authorList>
            <person name="Cheng C.Y."/>
            <person name="Krishnakumar V."/>
            <person name="Chan A.P."/>
            <person name="Thibaud-Nissen F."/>
            <person name="Schobel S."/>
            <person name="Town C.D."/>
        </authorList>
    </citation>
    <scope>GENOME REANNOTATION</scope>
    <source>
        <strain>cv. Columbia</strain>
    </source>
</reference>
<reference key="3">
    <citation type="submission" date="2005-05" db="EMBL/GenBank/DDBJ databases">
        <title>Arabidopsis ORF clones.</title>
        <authorList>
            <person name="Kim C.J."/>
            <person name="Chen H."/>
            <person name="Cheuk R."/>
            <person name="Shinn P."/>
            <person name="Ecker J.R."/>
        </authorList>
    </citation>
    <scope>NUCLEOTIDE SEQUENCE [LARGE SCALE MRNA]</scope>
    <source>
        <strain>cv. Columbia</strain>
    </source>
</reference>
<reference key="4">
    <citation type="submission" date="2008-10" db="EMBL/GenBank/DDBJ databases">
        <title>Arabidopsis ORF clones.</title>
        <authorList>
            <person name="De Los Reyes C."/>
            <person name="Quan R."/>
            <person name="Chen H."/>
            <person name="Bautista V.R."/>
            <person name="Kim C.J."/>
            <person name="Ecker J.R."/>
        </authorList>
    </citation>
    <scope>NUCLEOTIDE SEQUENCE [LARGE SCALE MRNA]</scope>
    <source>
        <strain>cv. Columbia</strain>
    </source>
</reference>
<reference key="5">
    <citation type="journal article" date="2005" name="J. Cell Biol.">
        <title>A Sec14p-nodulin domain phosphatidylinositol transfer protein polarizes membrane growth of Arabidopsis thaliana root hairs.</title>
        <authorList>
            <person name="Vincent P."/>
            <person name="Chua M."/>
            <person name="Nogue F."/>
            <person name="Fairbrother A."/>
            <person name="Mekeel H."/>
            <person name="Xu Y."/>
            <person name="Allen N."/>
            <person name="Bibikova T.N."/>
            <person name="Gilroy S."/>
            <person name="Bankaitis V.A."/>
        </authorList>
    </citation>
    <scope>GENE FAMILY</scope>
</reference>
<reference key="6">
    <citation type="journal article" date="2006" name="Nat. Chem. Biol.">
        <title>Phosphatidylinositol transfer proteins and cellular nanoreactors for lipid signaling.</title>
        <authorList>
            <person name="Ile K.E."/>
            <person name="Schaaf G."/>
            <person name="Bankaitis V.A."/>
        </authorList>
    </citation>
    <scope>REVIEW</scope>
</reference>
<feature type="chain" id="PRO_0000423473" description="Phosphatidylinositol/phosphatidylcholine transfer protein SFH13">
    <location>
        <begin position="1"/>
        <end position="625"/>
    </location>
</feature>
<feature type="domain" description="CRAL-TRIO" evidence="2">
    <location>
        <begin position="143"/>
        <end position="318"/>
    </location>
</feature>
<organism>
    <name type="scientific">Arabidopsis thaliana</name>
    <name type="common">Mouse-ear cress</name>
    <dbReference type="NCBI Taxonomy" id="3702"/>
    <lineage>
        <taxon>Eukaryota</taxon>
        <taxon>Viridiplantae</taxon>
        <taxon>Streptophyta</taxon>
        <taxon>Embryophyta</taxon>
        <taxon>Tracheophyta</taxon>
        <taxon>Spermatophyta</taxon>
        <taxon>Magnoliopsida</taxon>
        <taxon>eudicotyledons</taxon>
        <taxon>Gunneridae</taxon>
        <taxon>Pentapetalae</taxon>
        <taxon>rosids</taxon>
        <taxon>malvids</taxon>
        <taxon>Brassicales</taxon>
        <taxon>Brassicaceae</taxon>
        <taxon>Camelineae</taxon>
        <taxon>Arabidopsis</taxon>
    </lineage>
</organism>
<dbReference type="EMBL" id="AC002328">
    <property type="protein sequence ID" value="AAF79506.1"/>
    <property type="status" value="ALT_SEQ"/>
    <property type="molecule type" value="Genomic_DNA"/>
</dbReference>
<dbReference type="EMBL" id="CP002684">
    <property type="protein sequence ID" value="AEE33284.1"/>
    <property type="molecule type" value="Genomic_DNA"/>
</dbReference>
<dbReference type="EMBL" id="CP002684">
    <property type="protein sequence ID" value="AEE33286.1"/>
    <property type="molecule type" value="Genomic_DNA"/>
</dbReference>
<dbReference type="EMBL" id="CP002684">
    <property type="protein sequence ID" value="ANM61121.1"/>
    <property type="molecule type" value="Genomic_DNA"/>
</dbReference>
<dbReference type="EMBL" id="CP002684">
    <property type="protein sequence ID" value="ANM61122.1"/>
    <property type="molecule type" value="Genomic_DNA"/>
</dbReference>
<dbReference type="EMBL" id="BT021992">
    <property type="protein sequence ID" value="AAY25404.1"/>
    <property type="molecule type" value="mRNA"/>
</dbReference>
<dbReference type="EMBL" id="BT046119">
    <property type="protein sequence ID" value="ACI46507.1"/>
    <property type="molecule type" value="mRNA"/>
</dbReference>
<dbReference type="RefSeq" id="NP_001323358.1">
    <molecule id="Q501H5-1"/>
    <property type="nucleotide sequence ID" value="NM_001333723.1"/>
</dbReference>
<dbReference type="RefSeq" id="NP_001323359.1">
    <molecule id="Q501H5-1"/>
    <property type="nucleotide sequence ID" value="NM_001333722.1"/>
</dbReference>
<dbReference type="RefSeq" id="NP_849815.1">
    <molecule id="Q501H5-1"/>
    <property type="nucleotide sequence ID" value="NM_179484.3"/>
</dbReference>
<dbReference type="RefSeq" id="NP_849816.1">
    <molecule id="Q501H5-1"/>
    <property type="nucleotide sequence ID" value="NM_179485.2"/>
</dbReference>
<dbReference type="SMR" id="Q501H5"/>
<dbReference type="FunCoup" id="Q501H5">
    <property type="interactions" value="196"/>
</dbReference>
<dbReference type="STRING" id="3702.Q501H5"/>
<dbReference type="PaxDb" id="3702-AT1G55690.1"/>
<dbReference type="ProteomicsDB" id="232975">
    <molecule id="Q501H5-1"/>
</dbReference>
<dbReference type="EnsemblPlants" id="AT1G55690.1">
    <molecule id="Q501H5-1"/>
    <property type="protein sequence ID" value="AT1G55690.1"/>
    <property type="gene ID" value="AT1G55690"/>
</dbReference>
<dbReference type="EnsemblPlants" id="AT1G55690.2">
    <molecule id="Q501H5-1"/>
    <property type="protein sequence ID" value="AT1G55690.2"/>
    <property type="gene ID" value="AT1G55690"/>
</dbReference>
<dbReference type="EnsemblPlants" id="AT1G55690.4">
    <molecule id="Q501H5-1"/>
    <property type="protein sequence ID" value="AT1G55690.4"/>
    <property type="gene ID" value="AT1G55690"/>
</dbReference>
<dbReference type="EnsemblPlants" id="AT1G55690.5">
    <molecule id="Q501H5-1"/>
    <property type="protein sequence ID" value="AT1G55690.5"/>
    <property type="gene ID" value="AT1G55690"/>
</dbReference>
<dbReference type="GeneID" id="842018"/>
<dbReference type="Gramene" id="AT1G55690.1">
    <molecule id="Q501H5-1"/>
    <property type="protein sequence ID" value="AT1G55690.1"/>
    <property type="gene ID" value="AT1G55690"/>
</dbReference>
<dbReference type="Gramene" id="AT1G55690.2">
    <molecule id="Q501H5-1"/>
    <property type="protein sequence ID" value="AT1G55690.2"/>
    <property type="gene ID" value="AT1G55690"/>
</dbReference>
<dbReference type="Gramene" id="AT1G55690.4">
    <molecule id="Q501H5-1"/>
    <property type="protein sequence ID" value="AT1G55690.4"/>
    <property type="gene ID" value="AT1G55690"/>
</dbReference>
<dbReference type="Gramene" id="AT1G55690.5">
    <molecule id="Q501H5-1"/>
    <property type="protein sequence ID" value="AT1G55690.5"/>
    <property type="gene ID" value="AT1G55690"/>
</dbReference>
<dbReference type="KEGG" id="ath:AT1G55690"/>
<dbReference type="Araport" id="AT1G55690"/>
<dbReference type="TAIR" id="AT1G55690"/>
<dbReference type="eggNOG" id="KOG1471">
    <property type="taxonomic scope" value="Eukaryota"/>
</dbReference>
<dbReference type="HOGENOM" id="CLU_014001_11_0_1"/>
<dbReference type="InParanoid" id="Q501H5"/>
<dbReference type="OMA" id="IQMWDEM"/>
<dbReference type="PhylomeDB" id="Q501H5"/>
<dbReference type="PRO" id="PR:Q501H5"/>
<dbReference type="Proteomes" id="UP000006548">
    <property type="component" value="Chromosome 1"/>
</dbReference>
<dbReference type="ExpressionAtlas" id="Q501H5">
    <property type="expression patterns" value="baseline and differential"/>
</dbReference>
<dbReference type="GO" id="GO:0000139">
    <property type="term" value="C:Golgi membrane"/>
    <property type="evidence" value="ECO:0007669"/>
    <property type="project" value="UniProtKB-SubCell"/>
</dbReference>
<dbReference type="GO" id="GO:0005886">
    <property type="term" value="C:plasma membrane"/>
    <property type="evidence" value="ECO:0007669"/>
    <property type="project" value="UniProtKB-SubCell"/>
</dbReference>
<dbReference type="GO" id="GO:0015031">
    <property type="term" value="P:protein transport"/>
    <property type="evidence" value="ECO:0007669"/>
    <property type="project" value="UniProtKB-KW"/>
</dbReference>
<dbReference type="CDD" id="cd00170">
    <property type="entry name" value="SEC14"/>
    <property type="match status" value="1"/>
</dbReference>
<dbReference type="Gene3D" id="3.40.525.10">
    <property type="entry name" value="CRAL-TRIO lipid binding domain"/>
    <property type="match status" value="1"/>
</dbReference>
<dbReference type="Gene3D" id="1.10.8.20">
    <property type="entry name" value="N-terminal domain of phosphatidylinositol transfer protein sec14p"/>
    <property type="match status" value="1"/>
</dbReference>
<dbReference type="InterPro" id="IPR001251">
    <property type="entry name" value="CRAL-TRIO_dom"/>
</dbReference>
<dbReference type="InterPro" id="IPR036865">
    <property type="entry name" value="CRAL-TRIO_dom_sf"/>
</dbReference>
<dbReference type="InterPro" id="IPR011074">
    <property type="entry name" value="CRAL/TRIO_N_dom"/>
</dbReference>
<dbReference type="InterPro" id="IPR036273">
    <property type="entry name" value="CRAL/TRIO_N_dom_sf"/>
</dbReference>
<dbReference type="InterPro" id="IPR051026">
    <property type="entry name" value="PI/PC_transfer"/>
</dbReference>
<dbReference type="PANTHER" id="PTHR45657">
    <property type="entry name" value="CRAL-TRIO DOMAIN-CONTAINING PROTEIN YKL091C-RELATED"/>
    <property type="match status" value="1"/>
</dbReference>
<dbReference type="PANTHER" id="PTHR45657:SF8">
    <property type="entry name" value="PHOSPHATIDYLINOSITOL_PHOSPHATIDYLCHOLINE TRANSFER PROTEIN SFH13"/>
    <property type="match status" value="1"/>
</dbReference>
<dbReference type="Pfam" id="PF00650">
    <property type="entry name" value="CRAL_TRIO"/>
    <property type="match status" value="1"/>
</dbReference>
<dbReference type="SMART" id="SM01100">
    <property type="entry name" value="CRAL_TRIO_N"/>
    <property type="match status" value="1"/>
</dbReference>
<dbReference type="SMART" id="SM00516">
    <property type="entry name" value="SEC14"/>
    <property type="match status" value="1"/>
</dbReference>
<dbReference type="SUPFAM" id="SSF52087">
    <property type="entry name" value="CRAL/TRIO domain"/>
    <property type="match status" value="1"/>
</dbReference>
<dbReference type="SUPFAM" id="SSF46938">
    <property type="entry name" value="CRAL/TRIO N-terminal domain"/>
    <property type="match status" value="1"/>
</dbReference>
<dbReference type="PROSITE" id="PS50191">
    <property type="entry name" value="CRAL_TRIO"/>
    <property type="match status" value="1"/>
</dbReference>
<comment type="function">
    <text evidence="1">Required for transport of secretory proteins from the Golgi complex. Catalyzes the transfer of phosphatidylinositol and phosphatidylcholine between membranes in vitro (By similarity).</text>
</comment>
<comment type="subcellular location">
    <subcellularLocation>
        <location evidence="1">Golgi apparatus membrane</location>
        <topology evidence="1">Peripheral membrane protein</topology>
    </subcellularLocation>
    <subcellularLocation>
        <location evidence="1">Cell membrane</location>
        <topology evidence="1">Peripheral membrane protein</topology>
    </subcellularLocation>
</comment>
<comment type="alternative products">
    <event type="alternative splicing"/>
    <isoform>
        <id>Q501H5-1</id>
        <name>1</name>
        <sequence type="displayed"/>
    </isoform>
    <text>A number of isoforms are produced. According to EST sequences.</text>
</comment>
<comment type="similarity">
    <text evidence="3">Belongs to the SFH family.</text>
</comment>
<comment type="sequence caution" evidence="3">
    <conflict type="erroneous gene model prediction">
        <sequence resource="EMBL-CDS" id="AAF79506"/>
    </conflict>
</comment>
<protein>
    <recommendedName>
        <fullName>Phosphatidylinositol/phosphatidylcholine transfer protein SFH13</fullName>
    </recommendedName>
    <alternativeName>
        <fullName>Protein SEC FOURTEEN HOMOLOGS 13</fullName>
        <shortName>AtSFH13</shortName>
    </alternativeName>
</protein>
<sequence length="625" mass="72034">MSGVEEISTLDEFRERRSDFEISEDERRRSKIGNLKKKAINASTKFTHSLKKRGKRKIDYRVPAVSIEDVRDEKEESVVLEFRRKLLERDLLPPRHDEYHTLLRFLKARDLNIEKTTQLWEEMLRWRKEYGTDTILEDFDFEELEEVLQYYPQGYHGVDKEGRPVYIERLGKAHPSKLMRITTIDRYLKYHVQEFERALQEKFPACSIAAKRRICSTTTILDVQGLGIKNFTPTAANLVAAMSKIDNSYYPETLHRMYIVNAGTGFKKMLWPAAQKFLDAKTIAKIHVLEPKSLFKLHEVIDSSQLPEFLGGSCSCFGDGGGCLRSNKGPWNDPEIMKLIYHGESSLFRQSTRKLTDPHYSSSYISIHPSKAIQAETSAAESISCSDVPSSPTGRLCSASSHVNSAYEEARASDVNGYYSCDDKFAIPDKATNRKGQERQSQYQMRELNATTIGLKCETSSPGAPIIRWLHDLRVMIDKIKCENLAKRLLSLMLKLAAVFRYTPLELLRSQTTVSPSSLTEDDSRCSLISPPPREPTMKDRILPCLERIQKLEKSYEDIRNKPVAIPVEKERMLMDSLDRIKSVEFDLDKTKRLLHATVMKQMEITEMLQNIRDSQLHRRRRLFC</sequence>
<name>SFH13_ARATH</name>
<accession>Q501H5</accession>
<accession>Q9LFZ9</accession>
<evidence type="ECO:0000250" key="1"/>
<evidence type="ECO:0000255" key="2">
    <source>
        <dbReference type="PROSITE-ProRule" id="PRU00056"/>
    </source>
</evidence>
<evidence type="ECO:0000305" key="3"/>
<keyword id="KW-0025">Alternative splicing</keyword>
<keyword id="KW-1003">Cell membrane</keyword>
<keyword id="KW-0333">Golgi apparatus</keyword>
<keyword id="KW-0472">Membrane</keyword>
<keyword id="KW-0653">Protein transport</keyword>
<keyword id="KW-1185">Reference proteome</keyword>
<keyword id="KW-0813">Transport</keyword>
<gene>
    <name type="primary">SFH13</name>
    <name type="ordered locus">At1g55690</name>
    <name type="ORF">F20N2.11</name>
</gene>
<proteinExistence type="evidence at transcript level"/>